<reference key="1">
    <citation type="journal article" date="1995" name="Plant Physiol.">
        <title>Mitochondrial pyruvate dehydrogenase. Molecular cloning of the E1 alpha subunit and expression analysis.</title>
        <authorList>
            <person name="Grof C.P."/>
            <person name="Winning B.M."/>
            <person name="Scaysbrook T.P."/>
            <person name="Hill S.A."/>
            <person name="Leaver C.J."/>
        </authorList>
    </citation>
    <scope>NUCLEOTIDE SEQUENCE [MRNA]</scope>
    <source>
        <strain>cv. Desiree</strain>
        <tissue>Leaf</tissue>
    </source>
</reference>
<reference key="2">
    <citation type="journal article" date="2011" name="Nature">
        <title>Genome sequence and analysis of the tuber crop potato.</title>
        <authorList>
            <consortium name="The Potato Genome Sequencing Consortium"/>
        </authorList>
    </citation>
    <scope>NUCLEOTIDE SEQUENCE [LARGE SCALE GENOMIC DNA]</scope>
    <source>
        <strain>cv. DM1-3 516 R44</strain>
    </source>
</reference>
<reference key="3">
    <citation type="journal article" date="1998" name="Biochem. J.">
        <title>Plant mitochondrial pyruvate dehydrogenase complex: purification and identification of catalytic components in potato.</title>
        <authorList>
            <person name="Millar A.H."/>
            <person name="Knorpp C."/>
            <person name="Leaver C.J."/>
            <person name="Hill S.A."/>
        </authorList>
    </citation>
    <scope>PROTEIN SEQUENCE OF 27-42</scope>
    <source>
        <strain>cv. Romano</strain>
        <tissue>Tuber</tissue>
    </source>
</reference>
<keyword id="KW-0903">Direct protein sequencing</keyword>
<keyword id="KW-0460">Magnesium</keyword>
<keyword id="KW-0479">Metal-binding</keyword>
<keyword id="KW-0496">Mitochondrion</keyword>
<keyword id="KW-0560">Oxidoreductase</keyword>
<keyword id="KW-0597">Phosphoprotein</keyword>
<keyword id="KW-0670">Pyruvate</keyword>
<keyword id="KW-1185">Reference proteome</keyword>
<keyword id="KW-0786">Thiamine pyrophosphate</keyword>
<keyword id="KW-0809">Transit peptide</keyword>
<accession>P52903</accession>
<evidence type="ECO:0000250" key="1"/>
<evidence type="ECO:0000250" key="2">
    <source>
        <dbReference type="UniProtKB" id="P08559"/>
    </source>
</evidence>
<evidence type="ECO:0000256" key="3">
    <source>
        <dbReference type="SAM" id="MobiDB-lite"/>
    </source>
</evidence>
<evidence type="ECO:0000269" key="4">
    <source>
    </source>
</evidence>
<comment type="function">
    <text>The pyruvate dehydrogenase complex catalyzes the overall conversion of pyruvate to acetyl-CoA and CO(2). It contains multiple copies of three enzymatic components: pyruvate dehydrogenase (E1), dihydrolipoamide acetyltransferase (E2) and lipoamide dehydrogenase (E3).</text>
</comment>
<comment type="catalytic activity">
    <reaction>
        <text>N(6)-[(R)-lipoyl]-L-lysyl-[protein] + pyruvate + H(+) = N(6)-[(R)-S(8)-acetyldihydrolipoyl]-L-lysyl-[protein] + CO2</text>
        <dbReference type="Rhea" id="RHEA:19189"/>
        <dbReference type="Rhea" id="RHEA-COMP:10474"/>
        <dbReference type="Rhea" id="RHEA-COMP:10478"/>
        <dbReference type="ChEBI" id="CHEBI:15361"/>
        <dbReference type="ChEBI" id="CHEBI:15378"/>
        <dbReference type="ChEBI" id="CHEBI:16526"/>
        <dbReference type="ChEBI" id="CHEBI:83099"/>
        <dbReference type="ChEBI" id="CHEBI:83111"/>
        <dbReference type="EC" id="1.2.4.1"/>
    </reaction>
</comment>
<comment type="cofactor">
    <cofactor evidence="2">
        <name>thiamine diphosphate</name>
        <dbReference type="ChEBI" id="CHEBI:58937"/>
    </cofactor>
    <cofactor evidence="2">
        <name>Mg(2+)</name>
        <dbReference type="ChEBI" id="CHEBI:18420"/>
    </cofactor>
</comment>
<comment type="activity regulation">
    <text evidence="1">E1 activity is regulated by phosphorylation (inactivation) and dephosphorylation (activation) of the alpha subunit.</text>
</comment>
<comment type="subunit">
    <text evidence="1">Tetramer of 2 alpha and 2 beta subunits.</text>
</comment>
<comment type="subcellular location">
    <subcellularLocation>
        <location>Mitochondrion matrix</location>
    </subcellularLocation>
</comment>
<feature type="transit peptide" description="Mitochondrion" evidence="4">
    <location>
        <begin position="1"/>
        <end position="26"/>
    </location>
</feature>
<feature type="chain" id="PRO_0000020455" description="Pyruvate dehydrogenase E1 component subunit alpha, mitochondrial">
    <location>
        <begin position="27"/>
        <end position="391"/>
    </location>
</feature>
<feature type="region of interest" description="Disordered" evidence="3">
    <location>
        <begin position="294"/>
        <end position="313"/>
    </location>
</feature>
<feature type="compositionally biased region" description="Basic and acidic residues" evidence="3">
    <location>
        <begin position="303"/>
        <end position="313"/>
    </location>
</feature>
<feature type="binding site" evidence="2">
    <location>
        <position position="92"/>
    </location>
    <ligand>
        <name>pyruvate</name>
        <dbReference type="ChEBI" id="CHEBI:15361"/>
    </ligand>
</feature>
<feature type="binding site" evidence="2">
    <location>
        <position position="118"/>
    </location>
    <ligand>
        <name>pyruvate</name>
        <dbReference type="ChEBI" id="CHEBI:15361"/>
    </ligand>
</feature>
<feature type="binding site" evidence="2">
    <location>
        <position position="118"/>
    </location>
    <ligand>
        <name>thiamine diphosphate</name>
        <dbReference type="ChEBI" id="CHEBI:58937"/>
        <note>ligand shared with beta subunit</note>
    </ligand>
</feature>
<feature type="binding site" evidence="2">
    <location>
        <position position="119"/>
    </location>
    <ligand>
        <name>pyruvate</name>
        <dbReference type="ChEBI" id="CHEBI:15361"/>
    </ligand>
</feature>
<feature type="binding site" evidence="2">
    <location>
        <position position="119"/>
    </location>
    <ligand>
        <name>thiamine diphosphate</name>
        <dbReference type="ChEBI" id="CHEBI:58937"/>
        <note>ligand shared with beta subunit</note>
    </ligand>
</feature>
<feature type="binding site" evidence="2">
    <location>
        <position position="167"/>
    </location>
    <ligand>
        <name>pyruvate</name>
        <dbReference type="ChEBI" id="CHEBI:15361"/>
    </ligand>
</feature>
<feature type="binding site" evidence="2">
    <location>
        <position position="167"/>
    </location>
    <ligand>
        <name>thiamine diphosphate</name>
        <dbReference type="ChEBI" id="CHEBI:58937"/>
        <note>ligand shared with beta subunit</note>
    </ligand>
</feature>
<feature type="binding site" evidence="2">
    <location>
        <position position="169"/>
    </location>
    <ligand>
        <name>pyruvate</name>
        <dbReference type="ChEBI" id="CHEBI:15361"/>
    </ligand>
</feature>
<feature type="binding site" evidence="2">
    <location>
        <position position="169"/>
    </location>
    <ligand>
        <name>thiamine diphosphate</name>
        <dbReference type="ChEBI" id="CHEBI:58937"/>
        <note>ligand shared with beta subunit</note>
    </ligand>
</feature>
<feature type="binding site" evidence="2">
    <location>
        <position position="198"/>
    </location>
    <ligand>
        <name>Mg(2+)</name>
        <dbReference type="ChEBI" id="CHEBI:18420"/>
    </ligand>
</feature>
<feature type="binding site" evidence="2">
    <location>
        <position position="198"/>
    </location>
    <ligand>
        <name>pyruvate</name>
        <dbReference type="ChEBI" id="CHEBI:15361"/>
    </ligand>
</feature>
<feature type="binding site" evidence="2">
    <location>
        <position position="198"/>
    </location>
    <ligand>
        <name>thiamine diphosphate</name>
        <dbReference type="ChEBI" id="CHEBI:58937"/>
        <note>ligand shared with beta subunit</note>
    </ligand>
</feature>
<feature type="binding site" evidence="2">
    <location>
        <position position="199"/>
    </location>
    <ligand>
        <name>pyruvate</name>
        <dbReference type="ChEBI" id="CHEBI:15361"/>
    </ligand>
</feature>
<feature type="binding site" evidence="2">
    <location>
        <position position="199"/>
    </location>
    <ligand>
        <name>thiamine diphosphate</name>
        <dbReference type="ChEBI" id="CHEBI:58937"/>
        <note>ligand shared with beta subunit</note>
    </ligand>
</feature>
<feature type="binding site" evidence="2">
    <location>
        <position position="200"/>
    </location>
    <ligand>
        <name>pyruvate</name>
        <dbReference type="ChEBI" id="CHEBI:15361"/>
    </ligand>
</feature>
<feature type="binding site" evidence="2">
    <location>
        <position position="200"/>
    </location>
    <ligand>
        <name>thiamine diphosphate</name>
        <dbReference type="ChEBI" id="CHEBI:58937"/>
        <note>ligand shared with beta subunit</note>
    </ligand>
</feature>
<feature type="binding site" evidence="2">
    <location>
        <position position="227"/>
    </location>
    <ligand>
        <name>Mg(2+)</name>
        <dbReference type="ChEBI" id="CHEBI:18420"/>
    </ligand>
</feature>
<feature type="binding site" evidence="2">
    <location>
        <position position="227"/>
    </location>
    <ligand>
        <name>pyruvate</name>
        <dbReference type="ChEBI" id="CHEBI:15361"/>
    </ligand>
</feature>
<feature type="binding site" evidence="2">
    <location>
        <position position="227"/>
    </location>
    <ligand>
        <name>thiamine diphosphate</name>
        <dbReference type="ChEBI" id="CHEBI:58937"/>
        <note>ligand shared with beta subunit</note>
    </ligand>
</feature>
<feature type="binding site" evidence="2">
    <location>
        <position position="229"/>
    </location>
    <ligand>
        <name>Mg(2+)</name>
        <dbReference type="ChEBI" id="CHEBI:18420"/>
    </ligand>
</feature>
<feature type="binding site" evidence="2">
    <location>
        <position position="229"/>
    </location>
    <ligand>
        <name>pyruvate</name>
        <dbReference type="ChEBI" id="CHEBI:15361"/>
    </ligand>
</feature>
<feature type="binding site" evidence="2">
    <location>
        <position position="293"/>
    </location>
    <ligand>
        <name>thiamine diphosphate</name>
        <dbReference type="ChEBI" id="CHEBI:58937"/>
        <note>ligand shared with beta subunit</note>
    </ligand>
</feature>
<dbReference type="EC" id="1.2.4.1"/>
<dbReference type="EMBL" id="Z26949">
    <property type="protein sequence ID" value="CAA81558.1"/>
    <property type="molecule type" value="mRNA"/>
</dbReference>
<dbReference type="PIR" id="T07372">
    <property type="entry name" value="T07372"/>
</dbReference>
<dbReference type="SMR" id="P52903"/>
<dbReference type="FunCoup" id="P52903">
    <property type="interactions" value="2828"/>
</dbReference>
<dbReference type="IntAct" id="P52903">
    <property type="interactions" value="1"/>
</dbReference>
<dbReference type="STRING" id="4113.P52903"/>
<dbReference type="iPTMnet" id="P52903"/>
<dbReference type="PaxDb" id="4113-PGSC0003DMT400058223"/>
<dbReference type="ProMEX" id="P52903"/>
<dbReference type="EnsemblPlants" id="PGSC0003DMT400058223">
    <property type="protein sequence ID" value="PGSC0003DMT400058223"/>
    <property type="gene ID" value="PGSC0003DMG400022607"/>
</dbReference>
<dbReference type="Gramene" id="PGSC0003DMT400058223">
    <property type="protein sequence ID" value="PGSC0003DMT400058223"/>
    <property type="gene ID" value="PGSC0003DMG400022607"/>
</dbReference>
<dbReference type="eggNOG" id="KOG0225">
    <property type="taxonomic scope" value="Eukaryota"/>
</dbReference>
<dbReference type="HOGENOM" id="CLU_029393_5_0_1"/>
<dbReference type="InParanoid" id="P52903"/>
<dbReference type="OMA" id="LGYEMPC"/>
<dbReference type="BRENDA" id="1.2.1.104">
    <property type="organism ID" value="5757"/>
</dbReference>
<dbReference type="SABIO-RK" id="P52903"/>
<dbReference type="Proteomes" id="UP000011115">
    <property type="component" value="Unassembled WGS sequence"/>
</dbReference>
<dbReference type="ExpressionAtlas" id="P52903">
    <property type="expression patterns" value="baseline"/>
</dbReference>
<dbReference type="GO" id="GO:0005759">
    <property type="term" value="C:mitochondrial matrix"/>
    <property type="evidence" value="ECO:0007669"/>
    <property type="project" value="UniProtKB-SubCell"/>
</dbReference>
<dbReference type="GO" id="GO:0046872">
    <property type="term" value="F:metal ion binding"/>
    <property type="evidence" value="ECO:0007669"/>
    <property type="project" value="UniProtKB-KW"/>
</dbReference>
<dbReference type="GO" id="GO:0004739">
    <property type="term" value="F:pyruvate dehydrogenase (acetyl-transferring) activity"/>
    <property type="evidence" value="ECO:0000318"/>
    <property type="project" value="GO_Central"/>
</dbReference>
<dbReference type="GO" id="GO:0006086">
    <property type="term" value="P:pyruvate decarboxylation to acetyl-CoA"/>
    <property type="evidence" value="ECO:0000318"/>
    <property type="project" value="GO_Central"/>
</dbReference>
<dbReference type="CDD" id="cd02000">
    <property type="entry name" value="TPP_E1_PDC_ADC_BCADC"/>
    <property type="match status" value="1"/>
</dbReference>
<dbReference type="FunFam" id="3.40.50.970:FF:000013">
    <property type="entry name" value="Pyruvate dehydrogenase E1 component subunit alpha"/>
    <property type="match status" value="1"/>
</dbReference>
<dbReference type="Gene3D" id="3.40.50.970">
    <property type="match status" value="1"/>
</dbReference>
<dbReference type="InterPro" id="IPR001017">
    <property type="entry name" value="DH_E1"/>
</dbReference>
<dbReference type="InterPro" id="IPR050642">
    <property type="entry name" value="PDH_E1_Alpha_Subunit"/>
</dbReference>
<dbReference type="InterPro" id="IPR017597">
    <property type="entry name" value="Pyrv_DH_E1_asu_subgrp-y"/>
</dbReference>
<dbReference type="InterPro" id="IPR029061">
    <property type="entry name" value="THDP-binding"/>
</dbReference>
<dbReference type="NCBIfam" id="TIGR03182">
    <property type="entry name" value="PDH_E1_alph_y"/>
    <property type="match status" value="1"/>
</dbReference>
<dbReference type="PANTHER" id="PTHR11516:SF65">
    <property type="entry name" value="PYRUVATE DEHYDROGENASE E1 COMPONENT SUBUNIT ALPHA, MITOCHONDRIAL"/>
    <property type="match status" value="1"/>
</dbReference>
<dbReference type="PANTHER" id="PTHR11516">
    <property type="entry name" value="PYRUVATE DEHYDROGENASE E1 COMPONENT, ALPHA SUBUNIT BACTERIAL AND ORGANELLAR"/>
    <property type="match status" value="1"/>
</dbReference>
<dbReference type="Pfam" id="PF00676">
    <property type="entry name" value="E1_dh"/>
    <property type="match status" value="1"/>
</dbReference>
<dbReference type="SUPFAM" id="SSF52518">
    <property type="entry name" value="Thiamin diphosphate-binding fold (THDP-binding)"/>
    <property type="match status" value="1"/>
</dbReference>
<proteinExistence type="evidence at protein level"/>
<organism>
    <name type="scientific">Solanum tuberosum</name>
    <name type="common">Potato</name>
    <dbReference type="NCBI Taxonomy" id="4113"/>
    <lineage>
        <taxon>Eukaryota</taxon>
        <taxon>Viridiplantae</taxon>
        <taxon>Streptophyta</taxon>
        <taxon>Embryophyta</taxon>
        <taxon>Tracheophyta</taxon>
        <taxon>Spermatophyta</taxon>
        <taxon>Magnoliopsida</taxon>
        <taxon>eudicotyledons</taxon>
        <taxon>Gunneridae</taxon>
        <taxon>Pentapetalae</taxon>
        <taxon>asterids</taxon>
        <taxon>lamiids</taxon>
        <taxon>Solanales</taxon>
        <taxon>Solanaceae</taxon>
        <taxon>Solanoideae</taxon>
        <taxon>Solaneae</taxon>
        <taxon>Solanum</taxon>
    </lineage>
</organism>
<protein>
    <recommendedName>
        <fullName>Pyruvate dehydrogenase E1 component subunit alpha, mitochondrial</fullName>
        <shortName>PDHE1-A</shortName>
        <ecNumber>1.2.4.1</ecNumber>
    </recommendedName>
</protein>
<name>ODPA_SOLTU</name>
<sequence>MALSTSRAINHIMKPLSAAVCATRRLSSDSTATITVETSLPFTSHNIDPPSRSVETSPKELMTFFKDMTEMRRMEIAADSLYKAKLIRGFCHLYDGQEAVAVGMEAAITKKDCIITAYRDHCIFLGRGGTLVEAFAELMGRRDGCSRGKGGSMHFYKKESGFYGGHGIVGAQVPLGIGLAFAQKYKKEDYVTFAMYGDGAANQGQLFEALNMAALWDLPAILVCENNHYGMGTAEWRAAKSPAYYKRGDYVPGLRVDGMDVFAVKQACTFAKQHALKNGPIILEMDTYRYHGHSMSDPGSTYRTRDEISGVRQERDPVERIRSLILAHNIATEAELKDIEKENRKVVDEAIAKAKESPMPDPSELFTNVYVKGFGVEAYGADRKELRATLP</sequence>